<organism>
    <name type="scientific">Influenza A virus (strain A/Herring gull/DE/677/1988 H2N8)</name>
    <dbReference type="NCBI Taxonomy" id="387243"/>
    <lineage>
        <taxon>Viruses</taxon>
        <taxon>Riboviria</taxon>
        <taxon>Orthornavirae</taxon>
        <taxon>Negarnaviricota</taxon>
        <taxon>Polyploviricotina</taxon>
        <taxon>Insthoviricetes</taxon>
        <taxon>Articulavirales</taxon>
        <taxon>Orthomyxoviridae</taxon>
        <taxon>Alphainfluenzavirus</taxon>
        <taxon>Alphainfluenzavirus influenzae</taxon>
        <taxon>Influenza A virus</taxon>
    </lineage>
</organism>
<organismHost>
    <name type="scientific">Aves</name>
    <dbReference type="NCBI Taxonomy" id="8782"/>
</organismHost>
<name>NEP_I88A4</name>
<sequence>MDSNTMSSFQDILMRMSKMQLGSSSEDLNGMITQFESLKLYRDSLGEAVMRMGDLHSLQSRNGKWREQLSQKFEEIRWLIEEVRHRLKITENSFEQITFMQALQLLLEVEQEIRTFSFQLI</sequence>
<feature type="chain" id="PRO_0000324231" description="Nuclear export protein">
    <location>
        <begin position="1"/>
        <end position="121"/>
    </location>
</feature>
<feature type="short sequence motif" description="Nuclear export signal" evidence="1">
    <location>
        <begin position="12"/>
        <end position="21"/>
    </location>
</feature>
<feature type="short sequence motif" description="Nuclear export signal" evidence="1">
    <location>
        <begin position="85"/>
        <end position="94"/>
    </location>
</feature>
<reference key="1">
    <citation type="journal article" date="1998" name="Virus Res.">
        <title>Multiple alignment comparison of the non-structural genes of influenza A viruses.</title>
        <authorList>
            <person name="Suarez D.L."/>
            <person name="Perdue M.L."/>
        </authorList>
    </citation>
    <scope>NUCLEOTIDE SEQUENCE [GENOMIC RNA]</scope>
</reference>
<dbReference type="EMBL" id="U96745">
    <property type="protein sequence ID" value="AAB93950.1"/>
    <property type="molecule type" value="Genomic_RNA"/>
</dbReference>
<dbReference type="SMR" id="O57275"/>
<dbReference type="Proteomes" id="UP000160453">
    <property type="component" value="Genome"/>
</dbReference>
<dbReference type="GO" id="GO:0042025">
    <property type="term" value="C:host cell nucleus"/>
    <property type="evidence" value="ECO:0007669"/>
    <property type="project" value="UniProtKB-SubCell"/>
</dbReference>
<dbReference type="GO" id="GO:0044423">
    <property type="term" value="C:virion component"/>
    <property type="evidence" value="ECO:0007669"/>
    <property type="project" value="UniProtKB-UniRule"/>
</dbReference>
<dbReference type="GO" id="GO:0039675">
    <property type="term" value="P:exit of virus from host cell nucleus through nuclear pore"/>
    <property type="evidence" value="ECO:0007669"/>
    <property type="project" value="UniProtKB-UniRule"/>
</dbReference>
<dbReference type="Gene3D" id="1.10.287.230">
    <property type="match status" value="1"/>
</dbReference>
<dbReference type="Gene3D" id="1.10.287.10">
    <property type="entry name" value="S15/NS1, RNA-binding"/>
    <property type="match status" value="1"/>
</dbReference>
<dbReference type="HAMAP" id="MF_04067">
    <property type="entry name" value="INFV_NEP"/>
    <property type="match status" value="1"/>
</dbReference>
<dbReference type="InterPro" id="IPR000968">
    <property type="entry name" value="Flu_NS2"/>
</dbReference>
<dbReference type="Pfam" id="PF00601">
    <property type="entry name" value="Flu_NS2"/>
    <property type="match status" value="1"/>
</dbReference>
<dbReference type="SUPFAM" id="SSF101156">
    <property type="entry name" value="Nonstructural protein ns2, Nep, M1-binding domain"/>
    <property type="match status" value="1"/>
</dbReference>
<proteinExistence type="inferred from homology"/>
<protein>
    <recommendedName>
        <fullName evidence="1">Nuclear export protein</fullName>
        <shortName evidence="1">NEP</shortName>
    </recommendedName>
    <alternativeName>
        <fullName evidence="1">Non-structural protein 2</fullName>
        <shortName evidence="1">NS2</shortName>
    </alternativeName>
</protein>
<gene>
    <name evidence="1" type="primary">NS</name>
</gene>
<accession>O57275</accession>
<evidence type="ECO:0000255" key="1">
    <source>
        <dbReference type="HAMAP-Rule" id="MF_04067"/>
    </source>
</evidence>
<comment type="function">
    <text evidence="1">Mediates the nuclear export of encapsidated genomic RNAs (ribonucleoproteins, RNPs). Acts as an adapter between viral RNPs complexes and the nuclear export machinery of the cell. Possesses no intrinsic RNA-binding activity, but includes a C-terminal M1-binding domain. This domain is believed to allow recognition of RNPs bound to the protein M1. Since protein M1 is not available in large quantities before late stages of infection, such an indirect recognition mechanism probably ensures that genomic RNPs are not exported from the host nucleus until sufficient quantities of viral mRNA and progeny genomic RNA have been synthesized. Furthermore, the RNPs enter the host cytoplasm only when associated with the M1 protein that is necessary to guide them to the plasma membrane. May down-regulate viral RNA synthesis when overproduced.</text>
</comment>
<comment type="subunit">
    <text evidence="1">Interacts with protein M1. May interact with host nucleoporin RAB/HRB and exportin XPO1/CRM1.</text>
</comment>
<comment type="subcellular location">
    <subcellularLocation>
        <location evidence="1">Virion</location>
    </subcellularLocation>
    <subcellularLocation>
        <location evidence="1">Host nucleus</location>
    </subcellularLocation>
</comment>
<comment type="alternative products">
    <event type="alternative splicing"/>
    <isoform>
        <id>O57275-1</id>
        <name>NEP</name>
        <name>NS2</name>
        <sequence type="displayed"/>
    </isoform>
    <isoform>
        <id>O57276-1</id>
        <name>NS1</name>
        <sequence type="external"/>
    </isoform>
</comment>
<comment type="similarity">
    <text evidence="1">Belongs to the influenza viruses NEP family.</text>
</comment>
<keyword id="KW-0025">Alternative splicing</keyword>
<keyword id="KW-1048">Host nucleus</keyword>
<keyword id="KW-0945">Host-virus interaction</keyword>
<keyword id="KW-0813">Transport</keyword>
<keyword id="KW-0946">Virion</keyword>